<proteinExistence type="inferred from homology"/>
<evidence type="ECO:0000250" key="1"/>
<evidence type="ECO:0000255" key="2"/>
<evidence type="ECO:0000305" key="3"/>
<accession>O78687</accession>
<dbReference type="EC" id="7.1.1.2"/>
<dbReference type="EMBL" id="AB006953">
    <property type="protein sequence ID" value="BAA31247.1"/>
    <property type="molecule type" value="Genomic_DNA"/>
</dbReference>
<dbReference type="RefSeq" id="NP_008597.1">
    <property type="nucleotide sequence ID" value="NC_002079.1"/>
</dbReference>
<dbReference type="SMR" id="O78687"/>
<dbReference type="GeneID" id="808421"/>
<dbReference type="CTD" id="4538"/>
<dbReference type="OrthoDB" id="564260at2759"/>
<dbReference type="Proteomes" id="UP000515129">
    <property type="component" value="Mitochondrion MT"/>
</dbReference>
<dbReference type="GO" id="GO:0031966">
    <property type="term" value="C:mitochondrial membrane"/>
    <property type="evidence" value="ECO:0007669"/>
    <property type="project" value="UniProtKB-SubCell"/>
</dbReference>
<dbReference type="GO" id="GO:0008137">
    <property type="term" value="F:NADH dehydrogenase (ubiquinone) activity"/>
    <property type="evidence" value="ECO:0007669"/>
    <property type="project" value="UniProtKB-EC"/>
</dbReference>
<dbReference type="GO" id="GO:0048039">
    <property type="term" value="F:ubiquinone binding"/>
    <property type="evidence" value="ECO:0007669"/>
    <property type="project" value="TreeGrafter"/>
</dbReference>
<dbReference type="GO" id="GO:0042773">
    <property type="term" value="P:ATP synthesis coupled electron transport"/>
    <property type="evidence" value="ECO:0007669"/>
    <property type="project" value="InterPro"/>
</dbReference>
<dbReference type="GO" id="GO:0015990">
    <property type="term" value="P:electron transport coupled proton transport"/>
    <property type="evidence" value="ECO:0007669"/>
    <property type="project" value="TreeGrafter"/>
</dbReference>
<dbReference type="InterPro" id="IPR000260">
    <property type="entry name" value="NADH4_N"/>
</dbReference>
<dbReference type="InterPro" id="IPR010227">
    <property type="entry name" value="NADH_Q_OxRdtase_chainM/4"/>
</dbReference>
<dbReference type="InterPro" id="IPR003918">
    <property type="entry name" value="NADH_UbQ_OxRdtase"/>
</dbReference>
<dbReference type="InterPro" id="IPR001750">
    <property type="entry name" value="ND/Mrp_TM"/>
</dbReference>
<dbReference type="NCBIfam" id="TIGR01972">
    <property type="entry name" value="NDH_I_M"/>
    <property type="match status" value="1"/>
</dbReference>
<dbReference type="PANTHER" id="PTHR43507">
    <property type="entry name" value="NADH-UBIQUINONE OXIDOREDUCTASE CHAIN 4"/>
    <property type="match status" value="1"/>
</dbReference>
<dbReference type="PANTHER" id="PTHR43507:SF20">
    <property type="entry name" value="NADH-UBIQUINONE OXIDOREDUCTASE CHAIN 4"/>
    <property type="match status" value="1"/>
</dbReference>
<dbReference type="Pfam" id="PF01059">
    <property type="entry name" value="Oxidored_q5_N"/>
    <property type="match status" value="1"/>
</dbReference>
<dbReference type="Pfam" id="PF00361">
    <property type="entry name" value="Proton_antipo_M"/>
    <property type="match status" value="1"/>
</dbReference>
<dbReference type="PRINTS" id="PR01437">
    <property type="entry name" value="NUOXDRDTASE4"/>
</dbReference>
<feature type="chain" id="PRO_0000117915" description="NADH-ubiquinone oxidoreductase chain 4">
    <location>
        <begin position="1"/>
        <end position="460"/>
    </location>
</feature>
<feature type="transmembrane region" description="Helical" evidence="2">
    <location>
        <begin position="20"/>
        <end position="42"/>
    </location>
</feature>
<feature type="transmembrane region" description="Helical" evidence="2">
    <location>
        <begin position="61"/>
        <end position="81"/>
    </location>
</feature>
<feature type="transmembrane region" description="Helical" evidence="2">
    <location>
        <begin position="93"/>
        <end position="113"/>
    </location>
</feature>
<feature type="transmembrane region" description="Helical" evidence="2">
    <location>
        <begin position="114"/>
        <end position="134"/>
    </location>
</feature>
<feature type="transmembrane region" description="Helical" evidence="2">
    <location>
        <begin position="148"/>
        <end position="168"/>
    </location>
</feature>
<feature type="transmembrane region" description="Helical" evidence="2">
    <location>
        <begin position="195"/>
        <end position="215"/>
    </location>
</feature>
<feature type="transmembrane region" description="Helical" evidence="2">
    <location>
        <begin position="225"/>
        <end position="245"/>
    </location>
</feature>
<feature type="transmembrane region" description="Helical" evidence="2">
    <location>
        <begin position="258"/>
        <end position="278"/>
    </location>
</feature>
<feature type="transmembrane region" description="Helical" evidence="2">
    <location>
        <begin position="285"/>
        <end position="304"/>
    </location>
</feature>
<feature type="transmembrane region" description="Helical" evidence="2">
    <location>
        <begin position="308"/>
        <end position="330"/>
    </location>
</feature>
<feature type="transmembrane region" description="Helical" evidence="2">
    <location>
        <begin position="351"/>
        <end position="371"/>
    </location>
</feature>
<feature type="transmembrane region" description="Helical" evidence="2">
    <location>
        <begin position="394"/>
        <end position="414"/>
    </location>
</feature>
<protein>
    <recommendedName>
        <fullName>NADH-ubiquinone oxidoreductase chain 4</fullName>
        <ecNumber>7.1.1.2</ecNumber>
    </recommendedName>
    <alternativeName>
        <fullName>NADH dehydrogenase subunit 4</fullName>
    </alternativeName>
</protein>
<organism>
    <name type="scientific">Carassius auratus</name>
    <name type="common">Goldfish</name>
    <dbReference type="NCBI Taxonomy" id="7957"/>
    <lineage>
        <taxon>Eukaryota</taxon>
        <taxon>Metazoa</taxon>
        <taxon>Chordata</taxon>
        <taxon>Craniata</taxon>
        <taxon>Vertebrata</taxon>
        <taxon>Euteleostomi</taxon>
        <taxon>Actinopterygii</taxon>
        <taxon>Neopterygii</taxon>
        <taxon>Teleostei</taxon>
        <taxon>Ostariophysi</taxon>
        <taxon>Cypriniformes</taxon>
        <taxon>Cyprinidae</taxon>
        <taxon>Cyprininae</taxon>
        <taxon>Carassius</taxon>
    </lineage>
</organism>
<comment type="function">
    <text evidence="1">Core subunit of the mitochondrial membrane respiratory chain NADH dehydrogenase (Complex I) that is believed to belong to the minimal assembly required for catalysis. Complex I functions in the transfer of electrons from NADH to the respiratory chain. The immediate electron acceptor for the enzyme is believed to be ubiquinone (By similarity).</text>
</comment>
<comment type="catalytic activity">
    <reaction>
        <text>a ubiquinone + NADH + 5 H(+)(in) = a ubiquinol + NAD(+) + 4 H(+)(out)</text>
        <dbReference type="Rhea" id="RHEA:29091"/>
        <dbReference type="Rhea" id="RHEA-COMP:9565"/>
        <dbReference type="Rhea" id="RHEA-COMP:9566"/>
        <dbReference type="ChEBI" id="CHEBI:15378"/>
        <dbReference type="ChEBI" id="CHEBI:16389"/>
        <dbReference type="ChEBI" id="CHEBI:17976"/>
        <dbReference type="ChEBI" id="CHEBI:57540"/>
        <dbReference type="ChEBI" id="CHEBI:57945"/>
        <dbReference type="EC" id="7.1.1.2"/>
    </reaction>
</comment>
<comment type="subcellular location">
    <subcellularLocation>
        <location evidence="1">Mitochondrion membrane</location>
        <topology evidence="1">Multi-pass membrane protein</topology>
    </subcellularLocation>
</comment>
<comment type="similarity">
    <text evidence="3">Belongs to the complex I subunit 4 family.</text>
</comment>
<gene>
    <name type="primary">MT-ND4</name>
    <name type="synonym">MTND4</name>
    <name type="synonym">NADH4</name>
    <name type="synonym">ND4</name>
</gene>
<name>NU4M_CARAU</name>
<reference key="1">
    <citation type="journal article" date="1998" name="Zool. Sci.">
        <title>The complete sequence of mitochondrial genome from a gynogenetic triploid 'ginbuna' (Carassius auratus langsdorfi).</title>
        <authorList>
            <person name="Murakami M."/>
            <person name="Yamashita Y."/>
            <person name="Fujitani H."/>
        </authorList>
    </citation>
    <scope>NUCLEOTIDE SEQUENCE [GENOMIC DNA]</scope>
    <source>
        <strain>AZ3 / Langsdorfi</strain>
        <tissue>Oocyte</tissue>
    </source>
</reference>
<geneLocation type="mitochondrion"/>
<keyword id="KW-0249">Electron transport</keyword>
<keyword id="KW-0472">Membrane</keyword>
<keyword id="KW-0496">Mitochondrion</keyword>
<keyword id="KW-0520">NAD</keyword>
<keyword id="KW-1185">Reference proteome</keyword>
<keyword id="KW-0679">Respiratory chain</keyword>
<keyword id="KW-1278">Translocase</keyword>
<keyword id="KW-0812">Transmembrane</keyword>
<keyword id="KW-1133">Transmembrane helix</keyword>
<keyword id="KW-0813">Transport</keyword>
<keyword id="KW-0830">Ubiquinone</keyword>
<sequence length="460" mass="51554">MLKVLIPTIMLFPTIWLTSPKWLWTTTTAHSLLIASISLMWFKWTSETGWTSSNTYLATDPLSTPLLVLTCWLLPLMILASQNHINPEPISRQRLYITLLASLQTFLIMAFGATEIIMFYIMFEATLIPTLIIITRWGNQTERLNAGTYFLFYTLAGSLPLLVALLLLQQSTGTLSMLVLQYSQPLQLNSWGHMIWWAACLIAFLVKMPLYGVHLWLPKAHVEAPVAGSMVLAAVLLKLGGYGMMRMMVMLDPLSKELAYPFIILALWGIIMTGSICLRQTDLKSLIAYSSVSHMGLVAGGILIQTPWGFSGAIILMIAHGLVSSALFCLANTAYERTHSRTMILARGLQIIFPLTAVWWFIANLANLALPPLPNLMGELMIITTLFNWSPWTILLTGLGTLITAGYSLYMFLMSQRGPTPNHITGLQPFHTREHLLMTLHLIPVILLVTKPELMWGWCY</sequence>